<name>HS16A_WHEAT</name>
<accession>P12810</accession>
<organism>
    <name type="scientific">Triticum aestivum</name>
    <name type="common">Wheat</name>
    <dbReference type="NCBI Taxonomy" id="4565"/>
    <lineage>
        <taxon>Eukaryota</taxon>
        <taxon>Viridiplantae</taxon>
        <taxon>Streptophyta</taxon>
        <taxon>Embryophyta</taxon>
        <taxon>Tracheophyta</taxon>
        <taxon>Spermatophyta</taxon>
        <taxon>Magnoliopsida</taxon>
        <taxon>Liliopsida</taxon>
        <taxon>Poales</taxon>
        <taxon>Poaceae</taxon>
        <taxon>BOP clade</taxon>
        <taxon>Pooideae</taxon>
        <taxon>Triticodae</taxon>
        <taxon>Triticeae</taxon>
        <taxon>Triticinae</taxon>
        <taxon>Triticum</taxon>
    </lineage>
</organism>
<proteinExistence type="evidence at transcript level"/>
<dbReference type="EMBL" id="X13431">
    <property type="protein sequence ID" value="CAA31785.1"/>
    <property type="molecule type" value="mRNA"/>
</dbReference>
<dbReference type="PIR" id="S03178">
    <property type="entry name" value="HHWT17"/>
</dbReference>
<dbReference type="SMR" id="P12810"/>
<dbReference type="STRING" id="4565.P12810"/>
<dbReference type="PaxDb" id="4565-Traes_1AL_D8322513E.1"/>
<dbReference type="EnsemblPlants" id="TraesARI3B03G01574210.1">
    <property type="protein sequence ID" value="TraesARI3B03G01574210.1.CDS1"/>
    <property type="gene ID" value="TraesARI3B03G01574210"/>
</dbReference>
<dbReference type="EnsemblPlants" id="TraesARI3B03G01574240.1">
    <property type="protein sequence ID" value="TraesARI3B03G01574240.1.CDS1"/>
    <property type="gene ID" value="TraesARI3B03G01574240"/>
</dbReference>
<dbReference type="EnsemblPlants" id="TraesARI3B03G01574310.1">
    <property type="protein sequence ID" value="TraesARI3B03G01574310.1.CDS1"/>
    <property type="gene ID" value="TraesARI3B03G01574310"/>
</dbReference>
<dbReference type="EnsemblPlants" id="TraesJAG3B03G01560570.1">
    <property type="protein sequence ID" value="TraesJAG3B03G01560570.1.CDS1"/>
    <property type="gene ID" value="TraesJAG3B03G01560570"/>
</dbReference>
<dbReference type="EnsemblPlants" id="TraesJAG3B03G01560660.1">
    <property type="protein sequence ID" value="TraesJAG3B03G01560660.1.CDS1"/>
    <property type="gene ID" value="TraesJAG3B03G01560660"/>
</dbReference>
<dbReference type="EnsemblPlants" id="TraesJUL3B03G01564120.1">
    <property type="protein sequence ID" value="TraesJUL3B03G01564120.1.CDS1"/>
    <property type="gene ID" value="TraesJUL3B03G01564120"/>
</dbReference>
<dbReference type="EnsemblPlants" id="TraesJUL3B03G01564150.1">
    <property type="protein sequence ID" value="TraesJUL3B03G01564150.1.CDS1"/>
    <property type="gene ID" value="TraesJUL3B03G01564150"/>
</dbReference>
<dbReference type="EnsemblPlants" id="TraesJUL3B03G01564210.1">
    <property type="protein sequence ID" value="TraesJUL3B03G01564210.1.CDS1"/>
    <property type="gene ID" value="TraesJUL3B03G01564210"/>
</dbReference>
<dbReference type="EnsemblPlants" id="TraesLDM3B03G01552780.1">
    <property type="protein sequence ID" value="TraesLDM3B03G01552780.1.CDS1"/>
    <property type="gene ID" value="TraesLDM3B03G01552780"/>
</dbReference>
<dbReference type="EnsemblPlants" id="TraesLDMUn03G04541990.1">
    <property type="protein sequence ID" value="TraesLDMUn03G04541990.1.CDS1"/>
    <property type="gene ID" value="TraesLDMUn03G04541990"/>
</dbReference>
<dbReference type="EnsemblPlants" id="TraesMACUn03G04575220.1">
    <property type="protein sequence ID" value="TraesMACUn03G04575220.1.CDS1"/>
    <property type="gene ID" value="TraesMACUn03G04575220"/>
</dbReference>
<dbReference type="EnsemblPlants" id="TraesMACUn03G04612020.1">
    <property type="protein sequence ID" value="TraesMACUn03G04612020.1.CDS1"/>
    <property type="gene ID" value="TraesMACUn03G04612020"/>
</dbReference>
<dbReference type="EnsemblPlants" id="TraesPARA_EIv1.0_1035520.1">
    <property type="protein sequence ID" value="TraesPARA_EIv1.0_1035520.1.CDS1"/>
    <property type="gene ID" value="TraesPARA_EIv1.0_1035520"/>
</dbReference>
<dbReference type="EnsemblPlants" id="TraesPARA_EIv1.0_1035560.1">
    <property type="protein sequence ID" value="TraesPARA_EIv1.0_1035560.1.CDS1"/>
    <property type="gene ID" value="TraesPARA_EIv1.0_1035560"/>
</dbReference>
<dbReference type="EnsemblPlants" id="TraesPARA_EIv1.0_1035640.1">
    <property type="protein sequence ID" value="TraesPARA_EIv1.0_1035640.1.CDS1"/>
    <property type="gene ID" value="TraesPARA_EIv1.0_1035640"/>
</dbReference>
<dbReference type="EnsemblPlants" id="TraesPARA_EIv1.0_1035710.1">
    <property type="protein sequence ID" value="TraesPARA_EIv1.0_1035710.1.CDS1"/>
    <property type="gene ID" value="TraesPARA_EIv1.0_1035710"/>
</dbReference>
<dbReference type="EnsemblPlants" id="TraesPARA_EIv1.0_1035780.1">
    <property type="protein sequence ID" value="TraesPARA_EIv1.0_1035780.1.CDS1"/>
    <property type="gene ID" value="TraesPARA_EIv1.0_1035780"/>
</dbReference>
<dbReference type="EnsemblPlants" id="TraesSYM3B03G01575160.1">
    <property type="protein sequence ID" value="TraesSYM3B03G01575160.1.CDS1"/>
    <property type="gene ID" value="TraesSYM3B03G01575160"/>
</dbReference>
<dbReference type="Gramene" id="TraesARI3B03G01574210.1">
    <property type="protein sequence ID" value="TraesARI3B03G01574210.1.CDS1"/>
    <property type="gene ID" value="TraesARI3B03G01574210"/>
</dbReference>
<dbReference type="Gramene" id="TraesARI3B03G01574240.1">
    <property type="protein sequence ID" value="TraesARI3B03G01574240.1.CDS1"/>
    <property type="gene ID" value="TraesARI3B03G01574240"/>
</dbReference>
<dbReference type="Gramene" id="TraesARI3B03G01574310.1">
    <property type="protein sequence ID" value="TraesARI3B03G01574310.1.CDS1"/>
    <property type="gene ID" value="TraesARI3B03G01574310"/>
</dbReference>
<dbReference type="Gramene" id="TraesJAG3B03G01560570.1">
    <property type="protein sequence ID" value="TraesJAG3B03G01560570.1.CDS1"/>
    <property type="gene ID" value="TraesJAG3B03G01560570"/>
</dbReference>
<dbReference type="Gramene" id="TraesJAG3B03G01560660.1">
    <property type="protein sequence ID" value="TraesJAG3B03G01560660.1.CDS1"/>
    <property type="gene ID" value="TraesJAG3B03G01560660"/>
</dbReference>
<dbReference type="Gramene" id="TraesJUL3B03G01564120.1">
    <property type="protein sequence ID" value="TraesJUL3B03G01564120.1.CDS1"/>
    <property type="gene ID" value="TraesJUL3B03G01564120"/>
</dbReference>
<dbReference type="Gramene" id="TraesJUL3B03G01564150.1">
    <property type="protein sequence ID" value="TraesJUL3B03G01564150.1.CDS1"/>
    <property type="gene ID" value="TraesJUL3B03G01564150"/>
</dbReference>
<dbReference type="Gramene" id="TraesJUL3B03G01564210.1">
    <property type="protein sequence ID" value="TraesJUL3B03G01564210.1.CDS1"/>
    <property type="gene ID" value="TraesJUL3B03G01564210"/>
</dbReference>
<dbReference type="Gramene" id="TraesLDM3B03G01552780.1">
    <property type="protein sequence ID" value="TraesLDM3B03G01552780.1.CDS1"/>
    <property type="gene ID" value="TraesLDM3B03G01552780"/>
</dbReference>
<dbReference type="Gramene" id="TraesLDMUn03G04541990.1">
    <property type="protein sequence ID" value="TraesLDMUn03G04541990.1.CDS1"/>
    <property type="gene ID" value="TraesLDMUn03G04541990"/>
</dbReference>
<dbReference type="Gramene" id="TraesMACUn03G04575220.1">
    <property type="protein sequence ID" value="TraesMACUn03G04575220.1.CDS1"/>
    <property type="gene ID" value="TraesMACUn03G04575220"/>
</dbReference>
<dbReference type="Gramene" id="TraesMACUn03G04612020.1">
    <property type="protein sequence ID" value="TraesMACUn03G04612020.1.CDS1"/>
    <property type="gene ID" value="TraesMACUn03G04612020"/>
</dbReference>
<dbReference type="Gramene" id="TraesPARA_EIv1.0_1035520.1">
    <property type="protein sequence ID" value="TraesPARA_EIv1.0_1035520.1.CDS1"/>
    <property type="gene ID" value="TraesPARA_EIv1.0_1035520"/>
</dbReference>
<dbReference type="Gramene" id="TraesPARA_EIv1.0_1035560.1">
    <property type="protein sequence ID" value="TraesPARA_EIv1.0_1035560.1.CDS1"/>
    <property type="gene ID" value="TraesPARA_EIv1.0_1035560"/>
</dbReference>
<dbReference type="Gramene" id="TraesPARA_EIv1.0_1035640.1">
    <property type="protein sequence ID" value="TraesPARA_EIv1.0_1035640.1.CDS1"/>
    <property type="gene ID" value="TraesPARA_EIv1.0_1035640"/>
</dbReference>
<dbReference type="Gramene" id="TraesPARA_EIv1.0_1035710.1">
    <property type="protein sequence ID" value="TraesPARA_EIv1.0_1035710.1.CDS1"/>
    <property type="gene ID" value="TraesPARA_EIv1.0_1035710"/>
</dbReference>
<dbReference type="Gramene" id="TraesPARA_EIv1.0_1035780.1">
    <property type="protein sequence ID" value="TraesPARA_EIv1.0_1035780.1.CDS1"/>
    <property type="gene ID" value="TraesPARA_EIv1.0_1035780"/>
</dbReference>
<dbReference type="Gramene" id="TraesSYM3B03G01575160.1">
    <property type="protein sequence ID" value="TraesSYM3B03G01575160.1.CDS1"/>
    <property type="gene ID" value="TraesSYM3B03G01575160"/>
</dbReference>
<dbReference type="eggNOG" id="KOG0710">
    <property type="taxonomic scope" value="Eukaryota"/>
</dbReference>
<dbReference type="HOGENOM" id="CLU_046737_5_0_1"/>
<dbReference type="Proteomes" id="UP000019116">
    <property type="component" value="Unplaced"/>
</dbReference>
<dbReference type="ExpressionAtlas" id="P12810">
    <property type="expression patterns" value="baseline"/>
</dbReference>
<dbReference type="GO" id="GO:0005737">
    <property type="term" value="C:cytoplasm"/>
    <property type="evidence" value="ECO:0007669"/>
    <property type="project" value="UniProtKB-SubCell"/>
</dbReference>
<dbReference type="GO" id="GO:0044183">
    <property type="term" value="F:protein folding chaperone"/>
    <property type="evidence" value="ECO:0000269"/>
    <property type="project" value="DisProt"/>
</dbReference>
<dbReference type="GO" id="GO:0051082">
    <property type="term" value="F:unfolded protein binding"/>
    <property type="evidence" value="ECO:0000318"/>
    <property type="project" value="GO_Central"/>
</dbReference>
<dbReference type="GO" id="GO:0051259">
    <property type="term" value="P:protein complex oligomerization"/>
    <property type="evidence" value="ECO:0000318"/>
    <property type="project" value="GO_Central"/>
</dbReference>
<dbReference type="GO" id="GO:0006457">
    <property type="term" value="P:protein folding"/>
    <property type="evidence" value="ECO:0000318"/>
    <property type="project" value="GO_Central"/>
</dbReference>
<dbReference type="GO" id="GO:0009408">
    <property type="term" value="P:response to heat"/>
    <property type="evidence" value="ECO:0000318"/>
    <property type="project" value="GO_Central"/>
</dbReference>
<dbReference type="GO" id="GO:0042542">
    <property type="term" value="P:response to hydrogen peroxide"/>
    <property type="evidence" value="ECO:0000318"/>
    <property type="project" value="GO_Central"/>
</dbReference>
<dbReference type="GO" id="GO:0009651">
    <property type="term" value="P:response to salt stress"/>
    <property type="evidence" value="ECO:0000318"/>
    <property type="project" value="GO_Central"/>
</dbReference>
<dbReference type="CDD" id="cd06472">
    <property type="entry name" value="ACD_ScHsp26_like"/>
    <property type="match status" value="1"/>
</dbReference>
<dbReference type="DisProt" id="DP00677"/>
<dbReference type="FunFam" id="2.60.40.790:FF:000007">
    <property type="entry name" value="17.4 kDa class I heat shock protein"/>
    <property type="match status" value="1"/>
</dbReference>
<dbReference type="Gene3D" id="2.60.40.790">
    <property type="match status" value="1"/>
</dbReference>
<dbReference type="InterPro" id="IPR002068">
    <property type="entry name" value="A-crystallin/Hsp20_dom"/>
</dbReference>
<dbReference type="InterPro" id="IPR007052">
    <property type="entry name" value="CS_dom"/>
</dbReference>
<dbReference type="InterPro" id="IPR008978">
    <property type="entry name" value="HSP20-like_chaperone"/>
</dbReference>
<dbReference type="InterPro" id="IPR031107">
    <property type="entry name" value="Small_HSP"/>
</dbReference>
<dbReference type="PANTHER" id="PTHR11527">
    <property type="entry name" value="HEAT-SHOCK PROTEIN 20 FAMILY MEMBER"/>
    <property type="match status" value="1"/>
</dbReference>
<dbReference type="Pfam" id="PF00011">
    <property type="entry name" value="HSP20"/>
    <property type="match status" value="1"/>
</dbReference>
<dbReference type="SUPFAM" id="SSF49764">
    <property type="entry name" value="HSP20-like chaperones"/>
    <property type="match status" value="1"/>
</dbReference>
<dbReference type="PROSITE" id="PS01031">
    <property type="entry name" value="SHSP"/>
    <property type="match status" value="1"/>
</dbReference>
<keyword id="KW-0963">Cytoplasm</keyword>
<keyword id="KW-1185">Reference proteome</keyword>
<keyword id="KW-0346">Stress response</keyword>
<protein>
    <recommendedName>
        <fullName>16.9 kDa class I heat shock protein 1</fullName>
    </recommendedName>
    <alternativeName>
        <fullName>HSP 16.9</fullName>
    </alternativeName>
    <alternativeName>
        <fullName>Heat shock protein 16.9A</fullName>
    </alternativeName>
    <alternativeName>
        <fullName>Heat shock protein 17</fullName>
    </alternativeName>
    <alternativeName>
        <fullName>Low molecular weight heat shock protein</fullName>
    </alternativeName>
</protein>
<gene>
    <name type="primary">hsp16.9A</name>
</gene>
<sequence>MSIVRRSNVFDPFADLWADPFDTFRSIVPAISGGSSETAAFANARVDWKETPEAHVFKVDLPGVKKEEVKVEVEDGNVLVVSGERSREKEDKNDKWHRVERSSGKFVRRFRLPEDAKVEEVKAGLENGVLTVTVPKAEVKKPEVKAIEISG</sequence>
<feature type="chain" id="PRO_0000125990" description="16.9 kDa class I heat shock protein 1">
    <location>
        <begin position="1"/>
        <end position="151"/>
    </location>
</feature>
<feature type="domain" description="sHSP" evidence="1">
    <location>
        <begin position="37"/>
        <end position="151"/>
    </location>
</feature>
<comment type="subunit">
    <text>May form oligomeric structures.</text>
</comment>
<comment type="subcellular location">
    <subcellularLocation>
        <location evidence="2">Cytoplasm</location>
    </subcellularLocation>
</comment>
<comment type="similarity">
    <text evidence="1">Belongs to the small heat shock protein (HSP20) family.</text>
</comment>
<reference key="1">
    <citation type="journal article" date="1989" name="Nucleic Acids Res.">
        <title>A wheat cDNA clone which is homologous to the 17 kd heat-shock protein gene family of soybean.</title>
        <authorList>
            <person name="McElwain E.F."/>
            <person name="Spiker S."/>
        </authorList>
    </citation>
    <scope>NUCLEOTIDE SEQUENCE [MRNA]</scope>
    <source>
        <strain>cv. Yamhill</strain>
        <tissue>Coleoptile</tissue>
    </source>
</reference>
<evidence type="ECO:0000255" key="1">
    <source>
        <dbReference type="PROSITE-ProRule" id="PRU00285"/>
    </source>
</evidence>
<evidence type="ECO:0000305" key="2"/>